<comment type="function">
    <text evidence="1">Involved in the synthesis of autoinducer 2 (AI-2) which is secreted by bacteria and is used to communicate both the cell density and the metabolic potential of the environment. The regulation of gene expression in response to changes in cell density is called quorum sensing. Catalyzes the transformation of S-ribosylhomocysteine (RHC) to homocysteine (HC) and 4,5-dihydroxy-2,3-pentadione (DPD).</text>
</comment>
<comment type="catalytic activity">
    <reaction evidence="1">
        <text>S-(5-deoxy-D-ribos-5-yl)-L-homocysteine = (S)-4,5-dihydroxypentane-2,3-dione + L-homocysteine</text>
        <dbReference type="Rhea" id="RHEA:17753"/>
        <dbReference type="ChEBI" id="CHEBI:29484"/>
        <dbReference type="ChEBI" id="CHEBI:58195"/>
        <dbReference type="ChEBI" id="CHEBI:58199"/>
        <dbReference type="EC" id="4.4.1.21"/>
    </reaction>
</comment>
<comment type="cofactor">
    <cofactor evidence="1">
        <name>Fe cation</name>
        <dbReference type="ChEBI" id="CHEBI:24875"/>
    </cofactor>
    <text evidence="1">Binds 1 Fe cation per subunit.</text>
</comment>
<comment type="subunit">
    <text evidence="1">Homodimer.</text>
</comment>
<comment type="similarity">
    <text evidence="1">Belongs to the LuxS family.</text>
</comment>
<dbReference type="EC" id="4.4.1.21" evidence="1"/>
<dbReference type="EMBL" id="CP000936">
    <property type="protein sequence ID" value="ACA36718.1"/>
    <property type="molecule type" value="Genomic_DNA"/>
</dbReference>
<dbReference type="RefSeq" id="WP_000032550.1">
    <property type="nucleotide sequence ID" value="NC_010380.1"/>
</dbReference>
<dbReference type="SMR" id="B1I959"/>
<dbReference type="KEGG" id="spv:SPH_0450"/>
<dbReference type="HOGENOM" id="CLU_107531_2_1_9"/>
<dbReference type="Proteomes" id="UP000002163">
    <property type="component" value="Chromosome"/>
</dbReference>
<dbReference type="GO" id="GO:0005506">
    <property type="term" value="F:iron ion binding"/>
    <property type="evidence" value="ECO:0007669"/>
    <property type="project" value="InterPro"/>
</dbReference>
<dbReference type="GO" id="GO:0043768">
    <property type="term" value="F:S-ribosylhomocysteine lyase activity"/>
    <property type="evidence" value="ECO:0007669"/>
    <property type="project" value="UniProtKB-UniRule"/>
</dbReference>
<dbReference type="GO" id="GO:0009372">
    <property type="term" value="P:quorum sensing"/>
    <property type="evidence" value="ECO:0007669"/>
    <property type="project" value="UniProtKB-UniRule"/>
</dbReference>
<dbReference type="Gene3D" id="3.30.1360.80">
    <property type="entry name" value="S-ribosylhomocysteinase (LuxS)"/>
    <property type="match status" value="1"/>
</dbReference>
<dbReference type="HAMAP" id="MF_00091">
    <property type="entry name" value="LuxS"/>
    <property type="match status" value="1"/>
</dbReference>
<dbReference type="InterPro" id="IPR037005">
    <property type="entry name" value="LuxS_sf"/>
</dbReference>
<dbReference type="InterPro" id="IPR011249">
    <property type="entry name" value="Metalloenz_LuxS/M16"/>
</dbReference>
<dbReference type="InterPro" id="IPR003815">
    <property type="entry name" value="S-ribosylhomocysteinase"/>
</dbReference>
<dbReference type="NCBIfam" id="NF002607">
    <property type="entry name" value="PRK02260.2-5"/>
    <property type="match status" value="1"/>
</dbReference>
<dbReference type="NCBIfam" id="NF002608">
    <property type="entry name" value="PRK02260.3-1"/>
    <property type="match status" value="1"/>
</dbReference>
<dbReference type="PANTHER" id="PTHR35799">
    <property type="entry name" value="S-RIBOSYLHOMOCYSTEINE LYASE"/>
    <property type="match status" value="1"/>
</dbReference>
<dbReference type="PANTHER" id="PTHR35799:SF1">
    <property type="entry name" value="S-RIBOSYLHOMOCYSTEINE LYASE"/>
    <property type="match status" value="1"/>
</dbReference>
<dbReference type="Pfam" id="PF02664">
    <property type="entry name" value="LuxS"/>
    <property type="match status" value="1"/>
</dbReference>
<dbReference type="PIRSF" id="PIRSF006160">
    <property type="entry name" value="AI2"/>
    <property type="match status" value="1"/>
</dbReference>
<dbReference type="PRINTS" id="PR01487">
    <property type="entry name" value="LUXSPROTEIN"/>
</dbReference>
<dbReference type="SUPFAM" id="SSF63411">
    <property type="entry name" value="LuxS/MPP-like metallohydrolase"/>
    <property type="match status" value="1"/>
</dbReference>
<evidence type="ECO:0000255" key="1">
    <source>
        <dbReference type="HAMAP-Rule" id="MF_00091"/>
    </source>
</evidence>
<reference key="1">
    <citation type="journal article" date="2010" name="Genome Biol.">
        <title>Structure and dynamics of the pan-genome of Streptococcus pneumoniae and closely related species.</title>
        <authorList>
            <person name="Donati C."/>
            <person name="Hiller N.L."/>
            <person name="Tettelin H."/>
            <person name="Muzzi A."/>
            <person name="Croucher N.J."/>
            <person name="Angiuoli S.V."/>
            <person name="Oggioni M."/>
            <person name="Dunning Hotopp J.C."/>
            <person name="Hu F.Z."/>
            <person name="Riley D.R."/>
            <person name="Covacci A."/>
            <person name="Mitchell T.J."/>
            <person name="Bentley S.D."/>
            <person name="Kilian M."/>
            <person name="Ehrlich G.D."/>
            <person name="Rappuoli R."/>
            <person name="Moxon E.R."/>
            <person name="Masignani V."/>
        </authorList>
    </citation>
    <scope>NUCLEOTIDE SEQUENCE [LARGE SCALE GENOMIC DNA]</scope>
    <source>
        <strain>Hungary19A-6</strain>
    </source>
</reference>
<keyword id="KW-0071">Autoinducer synthesis</keyword>
<keyword id="KW-0408">Iron</keyword>
<keyword id="KW-0456">Lyase</keyword>
<keyword id="KW-0479">Metal-binding</keyword>
<keyword id="KW-0673">Quorum sensing</keyword>
<gene>
    <name evidence="1" type="primary">luxS</name>
    <name type="ordered locus">SPH_0450</name>
</gene>
<feature type="chain" id="PRO_1000093331" description="S-ribosylhomocysteine lyase">
    <location>
        <begin position="1"/>
        <end position="160"/>
    </location>
</feature>
<feature type="binding site" evidence="1">
    <location>
        <position position="57"/>
    </location>
    <ligand>
        <name>Fe cation</name>
        <dbReference type="ChEBI" id="CHEBI:24875"/>
    </ligand>
</feature>
<feature type="binding site" evidence="1">
    <location>
        <position position="61"/>
    </location>
    <ligand>
        <name>Fe cation</name>
        <dbReference type="ChEBI" id="CHEBI:24875"/>
    </ligand>
</feature>
<feature type="binding site" evidence="1">
    <location>
        <position position="127"/>
    </location>
    <ligand>
        <name>Fe cation</name>
        <dbReference type="ChEBI" id="CHEBI:24875"/>
    </ligand>
</feature>
<protein>
    <recommendedName>
        <fullName evidence="1">S-ribosylhomocysteine lyase</fullName>
        <ecNumber evidence="1">4.4.1.21</ecNumber>
    </recommendedName>
    <alternativeName>
        <fullName evidence="1">AI-2 synthesis protein</fullName>
    </alternativeName>
    <alternativeName>
        <fullName evidence="1">Autoinducer-2 production protein LuxS</fullName>
    </alternativeName>
</protein>
<accession>B1I959</accession>
<proteinExistence type="inferred from homology"/>
<organism>
    <name type="scientific">Streptococcus pneumoniae (strain Hungary19A-6)</name>
    <dbReference type="NCBI Taxonomy" id="487214"/>
    <lineage>
        <taxon>Bacteria</taxon>
        <taxon>Bacillati</taxon>
        <taxon>Bacillota</taxon>
        <taxon>Bacilli</taxon>
        <taxon>Lactobacillales</taxon>
        <taxon>Streptococcaceae</taxon>
        <taxon>Streptococcus</taxon>
    </lineage>
</organism>
<name>LUXS_STRPI</name>
<sequence>MSKEVIVESFELDHTIVKAPYVRLIGEETGPKGDIISNYDIRLVQPNEDSIPTAGLHTIEHLLAKLIRTRIDGMIDCSPFGCRTGFHMIMWGRHTSAKIAAVIKDSLKEIAETTTWEDVPGTTIESCGNYKDHSLFSAKEWAKLILEQGISDDAFERHVI</sequence>